<organism>
    <name type="scientific">Mycobacterium ulcerans (strain Agy99)</name>
    <dbReference type="NCBI Taxonomy" id="362242"/>
    <lineage>
        <taxon>Bacteria</taxon>
        <taxon>Bacillati</taxon>
        <taxon>Actinomycetota</taxon>
        <taxon>Actinomycetes</taxon>
        <taxon>Mycobacteriales</taxon>
        <taxon>Mycobacteriaceae</taxon>
        <taxon>Mycobacterium</taxon>
        <taxon>Mycobacterium ulcerans group</taxon>
    </lineage>
</organism>
<protein>
    <recommendedName>
        <fullName evidence="1">Peptidyl-tRNA hydrolase</fullName>
        <shortName evidence="1">Pth</shortName>
        <ecNumber evidence="1">3.1.1.29</ecNumber>
    </recommendedName>
</protein>
<feature type="chain" id="PRO_1000010617" description="Peptidyl-tRNA hydrolase">
    <location>
        <begin position="1"/>
        <end position="191"/>
    </location>
</feature>
<feature type="active site" description="Proton acceptor" evidence="1">
    <location>
        <position position="22"/>
    </location>
</feature>
<feature type="binding site" evidence="1">
    <location>
        <position position="17"/>
    </location>
    <ligand>
        <name>tRNA</name>
        <dbReference type="ChEBI" id="CHEBI:17843"/>
    </ligand>
</feature>
<feature type="binding site" evidence="1">
    <location>
        <position position="68"/>
    </location>
    <ligand>
        <name>tRNA</name>
        <dbReference type="ChEBI" id="CHEBI:17843"/>
    </ligand>
</feature>
<feature type="binding site" evidence="1">
    <location>
        <position position="70"/>
    </location>
    <ligand>
        <name>tRNA</name>
        <dbReference type="ChEBI" id="CHEBI:17843"/>
    </ligand>
</feature>
<feature type="binding site" evidence="1">
    <location>
        <position position="116"/>
    </location>
    <ligand>
        <name>tRNA</name>
        <dbReference type="ChEBI" id="CHEBI:17843"/>
    </ligand>
</feature>
<feature type="site" description="Discriminates between blocked and unblocked aminoacyl-tRNA" evidence="1">
    <location>
        <position position="12"/>
    </location>
</feature>
<feature type="site" description="Stabilizes the basic form of H active site to accept a proton" evidence="1">
    <location>
        <position position="95"/>
    </location>
</feature>
<evidence type="ECO:0000255" key="1">
    <source>
        <dbReference type="HAMAP-Rule" id="MF_00083"/>
    </source>
</evidence>
<keyword id="KW-0963">Cytoplasm</keyword>
<keyword id="KW-0378">Hydrolase</keyword>
<keyword id="KW-0694">RNA-binding</keyword>
<keyword id="KW-0820">tRNA-binding</keyword>
<dbReference type="EC" id="3.1.1.29" evidence="1"/>
<dbReference type="EMBL" id="CP000325">
    <property type="protein sequence ID" value="ABL06585.1"/>
    <property type="molecule type" value="Genomic_DNA"/>
</dbReference>
<dbReference type="RefSeq" id="WP_011742180.1">
    <property type="nucleotide sequence ID" value="NC_008611.1"/>
</dbReference>
<dbReference type="SMR" id="A0PW66"/>
<dbReference type="KEGG" id="mul:MUL_4644"/>
<dbReference type="eggNOG" id="COG0193">
    <property type="taxonomic scope" value="Bacteria"/>
</dbReference>
<dbReference type="HOGENOM" id="CLU_062456_2_2_11"/>
<dbReference type="Proteomes" id="UP000000765">
    <property type="component" value="Chromosome"/>
</dbReference>
<dbReference type="GO" id="GO:0005737">
    <property type="term" value="C:cytoplasm"/>
    <property type="evidence" value="ECO:0007669"/>
    <property type="project" value="UniProtKB-SubCell"/>
</dbReference>
<dbReference type="GO" id="GO:0004045">
    <property type="term" value="F:peptidyl-tRNA hydrolase activity"/>
    <property type="evidence" value="ECO:0007669"/>
    <property type="project" value="UniProtKB-UniRule"/>
</dbReference>
<dbReference type="GO" id="GO:0000049">
    <property type="term" value="F:tRNA binding"/>
    <property type="evidence" value="ECO:0007669"/>
    <property type="project" value="UniProtKB-UniRule"/>
</dbReference>
<dbReference type="GO" id="GO:0006515">
    <property type="term" value="P:protein quality control for misfolded or incompletely synthesized proteins"/>
    <property type="evidence" value="ECO:0007669"/>
    <property type="project" value="UniProtKB-UniRule"/>
</dbReference>
<dbReference type="GO" id="GO:0072344">
    <property type="term" value="P:rescue of stalled ribosome"/>
    <property type="evidence" value="ECO:0007669"/>
    <property type="project" value="UniProtKB-UniRule"/>
</dbReference>
<dbReference type="CDD" id="cd00462">
    <property type="entry name" value="PTH"/>
    <property type="match status" value="1"/>
</dbReference>
<dbReference type="FunFam" id="3.40.50.1470:FF:000001">
    <property type="entry name" value="Peptidyl-tRNA hydrolase"/>
    <property type="match status" value="1"/>
</dbReference>
<dbReference type="Gene3D" id="3.40.50.1470">
    <property type="entry name" value="Peptidyl-tRNA hydrolase"/>
    <property type="match status" value="1"/>
</dbReference>
<dbReference type="HAMAP" id="MF_00083">
    <property type="entry name" value="Pept_tRNA_hydro_bact"/>
    <property type="match status" value="1"/>
</dbReference>
<dbReference type="InterPro" id="IPR001328">
    <property type="entry name" value="Pept_tRNA_hydro"/>
</dbReference>
<dbReference type="InterPro" id="IPR018171">
    <property type="entry name" value="Pept_tRNA_hydro_CS"/>
</dbReference>
<dbReference type="InterPro" id="IPR036416">
    <property type="entry name" value="Pept_tRNA_hydro_sf"/>
</dbReference>
<dbReference type="NCBIfam" id="TIGR00447">
    <property type="entry name" value="pth"/>
    <property type="match status" value="1"/>
</dbReference>
<dbReference type="PANTHER" id="PTHR17224">
    <property type="entry name" value="PEPTIDYL-TRNA HYDROLASE"/>
    <property type="match status" value="1"/>
</dbReference>
<dbReference type="PANTHER" id="PTHR17224:SF1">
    <property type="entry name" value="PEPTIDYL-TRNA HYDROLASE"/>
    <property type="match status" value="1"/>
</dbReference>
<dbReference type="Pfam" id="PF01195">
    <property type="entry name" value="Pept_tRNA_hydro"/>
    <property type="match status" value="1"/>
</dbReference>
<dbReference type="SUPFAM" id="SSF53178">
    <property type="entry name" value="Peptidyl-tRNA hydrolase-like"/>
    <property type="match status" value="1"/>
</dbReference>
<dbReference type="PROSITE" id="PS01195">
    <property type="entry name" value="PEPT_TRNA_HYDROL_1"/>
    <property type="match status" value="1"/>
</dbReference>
<dbReference type="PROSITE" id="PS01196">
    <property type="entry name" value="PEPT_TRNA_HYDROL_2"/>
    <property type="match status" value="1"/>
</dbReference>
<comment type="function">
    <text evidence="1">Hydrolyzes ribosome-free peptidyl-tRNAs (with 1 or more amino acids incorporated), which drop off the ribosome during protein synthesis, or as a result of ribosome stalling.</text>
</comment>
<comment type="function">
    <text evidence="1">Catalyzes the release of premature peptidyl moieties from peptidyl-tRNA molecules trapped in stalled 50S ribosomal subunits, and thus maintains levels of free tRNAs and 50S ribosomes.</text>
</comment>
<comment type="catalytic activity">
    <reaction evidence="1">
        <text>an N-acyl-L-alpha-aminoacyl-tRNA + H2O = an N-acyl-L-amino acid + a tRNA + H(+)</text>
        <dbReference type="Rhea" id="RHEA:54448"/>
        <dbReference type="Rhea" id="RHEA-COMP:10123"/>
        <dbReference type="Rhea" id="RHEA-COMP:13883"/>
        <dbReference type="ChEBI" id="CHEBI:15377"/>
        <dbReference type="ChEBI" id="CHEBI:15378"/>
        <dbReference type="ChEBI" id="CHEBI:59874"/>
        <dbReference type="ChEBI" id="CHEBI:78442"/>
        <dbReference type="ChEBI" id="CHEBI:138191"/>
        <dbReference type="EC" id="3.1.1.29"/>
    </reaction>
</comment>
<comment type="subunit">
    <text evidence="1">Monomer.</text>
</comment>
<comment type="subcellular location">
    <subcellularLocation>
        <location evidence="1">Cytoplasm</location>
    </subcellularLocation>
</comment>
<comment type="similarity">
    <text evidence="1">Belongs to the PTH family.</text>
</comment>
<accession>A0PW66</accession>
<proteinExistence type="inferred from homology"/>
<reference key="1">
    <citation type="journal article" date="2007" name="Genome Res.">
        <title>Reductive evolution and niche adaptation inferred from the genome of Mycobacterium ulcerans, the causative agent of Buruli ulcer.</title>
        <authorList>
            <person name="Stinear T.P."/>
            <person name="Seemann T."/>
            <person name="Pidot S."/>
            <person name="Frigui W."/>
            <person name="Reysset G."/>
            <person name="Garnier T."/>
            <person name="Meurice G."/>
            <person name="Simon D."/>
            <person name="Bouchier C."/>
            <person name="Ma L."/>
            <person name="Tichit M."/>
            <person name="Porter J.L."/>
            <person name="Ryan J."/>
            <person name="Johnson P.D.R."/>
            <person name="Davies J.K."/>
            <person name="Jenkin G.A."/>
            <person name="Small P.L.C."/>
            <person name="Jones L.M."/>
            <person name="Tekaia F."/>
            <person name="Laval F."/>
            <person name="Daffe M."/>
            <person name="Parkhill J."/>
            <person name="Cole S.T."/>
        </authorList>
    </citation>
    <scope>NUCLEOTIDE SEQUENCE [LARGE SCALE GENOMIC DNA]</scope>
    <source>
        <strain>Agy99</strain>
    </source>
</reference>
<sequence>MAEPLLVVGLGNPGENYARTRHNLGFMVADLLAARLGAKFKVHKRSGAEVVTGRLAQRSVVLAKPRCYMNESGRQVAPLAKFYSVPPADLIVIHDELDLDFGRIRLKFGGGEGGHNGLRSVAAALGTKNFQRVRIGIGRPPGRKDPATFVLENFSSPERPEVPTICEQAADATELLVEVGLEPAQNRVHAW</sequence>
<name>PTH_MYCUA</name>
<gene>
    <name evidence="1" type="primary">pth</name>
    <name type="ordered locus">MUL_4644</name>
</gene>